<proteinExistence type="inferred from homology"/>
<dbReference type="EC" id="6.3.5.2" evidence="1"/>
<dbReference type="EMBL" id="CP000133">
    <property type="protein sequence ID" value="ABC89119.1"/>
    <property type="molecule type" value="Genomic_DNA"/>
</dbReference>
<dbReference type="RefSeq" id="WP_011423681.1">
    <property type="nucleotide sequence ID" value="NC_007761.1"/>
</dbReference>
<dbReference type="SMR" id="Q2KDG7"/>
<dbReference type="MEROPS" id="C26.957"/>
<dbReference type="KEGG" id="ret:RHE_CH00297"/>
<dbReference type="eggNOG" id="COG0518">
    <property type="taxonomic scope" value="Bacteria"/>
</dbReference>
<dbReference type="eggNOG" id="COG0519">
    <property type="taxonomic scope" value="Bacteria"/>
</dbReference>
<dbReference type="HOGENOM" id="CLU_014340_0_5_5"/>
<dbReference type="OrthoDB" id="9802219at2"/>
<dbReference type="UniPathway" id="UPA00189">
    <property type="reaction ID" value="UER00296"/>
</dbReference>
<dbReference type="Proteomes" id="UP000001936">
    <property type="component" value="Chromosome"/>
</dbReference>
<dbReference type="GO" id="GO:0005829">
    <property type="term" value="C:cytosol"/>
    <property type="evidence" value="ECO:0007669"/>
    <property type="project" value="TreeGrafter"/>
</dbReference>
<dbReference type="GO" id="GO:0005524">
    <property type="term" value="F:ATP binding"/>
    <property type="evidence" value="ECO:0007669"/>
    <property type="project" value="UniProtKB-UniRule"/>
</dbReference>
<dbReference type="GO" id="GO:0003921">
    <property type="term" value="F:GMP synthase activity"/>
    <property type="evidence" value="ECO:0007669"/>
    <property type="project" value="InterPro"/>
</dbReference>
<dbReference type="CDD" id="cd01742">
    <property type="entry name" value="GATase1_GMP_Synthase"/>
    <property type="match status" value="1"/>
</dbReference>
<dbReference type="CDD" id="cd01997">
    <property type="entry name" value="GMP_synthase_C"/>
    <property type="match status" value="1"/>
</dbReference>
<dbReference type="FunFam" id="3.30.300.10:FF:000002">
    <property type="entry name" value="GMP synthase [glutamine-hydrolyzing]"/>
    <property type="match status" value="1"/>
</dbReference>
<dbReference type="FunFam" id="3.40.50.620:FF:000001">
    <property type="entry name" value="GMP synthase [glutamine-hydrolyzing]"/>
    <property type="match status" value="1"/>
</dbReference>
<dbReference type="FunFam" id="3.40.50.880:FF:000001">
    <property type="entry name" value="GMP synthase [glutamine-hydrolyzing]"/>
    <property type="match status" value="1"/>
</dbReference>
<dbReference type="Gene3D" id="3.30.300.10">
    <property type="match status" value="1"/>
</dbReference>
<dbReference type="Gene3D" id="3.40.50.880">
    <property type="match status" value="1"/>
</dbReference>
<dbReference type="Gene3D" id="3.40.50.620">
    <property type="entry name" value="HUPs"/>
    <property type="match status" value="1"/>
</dbReference>
<dbReference type="HAMAP" id="MF_00344">
    <property type="entry name" value="GMP_synthase"/>
    <property type="match status" value="1"/>
</dbReference>
<dbReference type="InterPro" id="IPR029062">
    <property type="entry name" value="Class_I_gatase-like"/>
</dbReference>
<dbReference type="InterPro" id="IPR017926">
    <property type="entry name" value="GATASE"/>
</dbReference>
<dbReference type="InterPro" id="IPR001674">
    <property type="entry name" value="GMP_synth_C"/>
</dbReference>
<dbReference type="InterPro" id="IPR004739">
    <property type="entry name" value="GMP_synth_GATase"/>
</dbReference>
<dbReference type="InterPro" id="IPR022955">
    <property type="entry name" value="GMP_synthase"/>
</dbReference>
<dbReference type="InterPro" id="IPR025777">
    <property type="entry name" value="GMPS_ATP_PPase_dom"/>
</dbReference>
<dbReference type="InterPro" id="IPR022310">
    <property type="entry name" value="NAD/GMP_synthase"/>
</dbReference>
<dbReference type="InterPro" id="IPR014729">
    <property type="entry name" value="Rossmann-like_a/b/a_fold"/>
</dbReference>
<dbReference type="NCBIfam" id="TIGR00884">
    <property type="entry name" value="guaA_Cterm"/>
    <property type="match status" value="1"/>
</dbReference>
<dbReference type="NCBIfam" id="TIGR00888">
    <property type="entry name" value="guaA_Nterm"/>
    <property type="match status" value="1"/>
</dbReference>
<dbReference type="NCBIfam" id="NF000848">
    <property type="entry name" value="PRK00074.1"/>
    <property type="match status" value="1"/>
</dbReference>
<dbReference type="PANTHER" id="PTHR11922:SF2">
    <property type="entry name" value="GMP SYNTHASE [GLUTAMINE-HYDROLYZING]"/>
    <property type="match status" value="1"/>
</dbReference>
<dbReference type="PANTHER" id="PTHR11922">
    <property type="entry name" value="GMP SYNTHASE-RELATED"/>
    <property type="match status" value="1"/>
</dbReference>
<dbReference type="Pfam" id="PF00117">
    <property type="entry name" value="GATase"/>
    <property type="match status" value="1"/>
</dbReference>
<dbReference type="Pfam" id="PF00958">
    <property type="entry name" value="GMP_synt_C"/>
    <property type="match status" value="1"/>
</dbReference>
<dbReference type="Pfam" id="PF02540">
    <property type="entry name" value="NAD_synthase"/>
    <property type="match status" value="1"/>
</dbReference>
<dbReference type="PRINTS" id="PR00097">
    <property type="entry name" value="ANTSNTHASEII"/>
</dbReference>
<dbReference type="PRINTS" id="PR00096">
    <property type="entry name" value="GATASE"/>
</dbReference>
<dbReference type="SUPFAM" id="SSF52402">
    <property type="entry name" value="Adenine nucleotide alpha hydrolases-like"/>
    <property type="match status" value="1"/>
</dbReference>
<dbReference type="SUPFAM" id="SSF52317">
    <property type="entry name" value="Class I glutamine amidotransferase-like"/>
    <property type="match status" value="1"/>
</dbReference>
<dbReference type="SUPFAM" id="SSF54810">
    <property type="entry name" value="GMP synthetase C-terminal dimerisation domain"/>
    <property type="match status" value="1"/>
</dbReference>
<dbReference type="PROSITE" id="PS51273">
    <property type="entry name" value="GATASE_TYPE_1"/>
    <property type="match status" value="1"/>
</dbReference>
<dbReference type="PROSITE" id="PS51553">
    <property type="entry name" value="GMPS_ATP_PPASE"/>
    <property type="match status" value="1"/>
</dbReference>
<gene>
    <name evidence="1" type="primary">guaA</name>
    <name type="ordered locus">RHE_CH00297</name>
</gene>
<sequence>MTQTAHPDSVLIVDFGSQVTQLIARRVREAGVYCEIVPFQSAEEGFKRLQPKAVILSGSPASTVDEGSPRAPQIIFDSGLPVFGICYGQQTMCMQLGGKVESGHHREFGRAFLDVDKDCELFEGLWSSGSRHQVWMSHGDRVTALPDGFKVVATSSNAPFAFIADEKRKYYGVQFHPEVVHTPDGAKLIGNFIHNVAGIKGDWSMSAYRQKAVEEIRKQVGDKRVICALSGGVDSSVAALLIHEAVGDQLTCILVDHGLMRKDEAANVVAMFREHYNLHLLHVDASDRFIGELEGVSDPETKRKIIGRLFIETFEEEAKKLGGADFLGQGTLYPDVIESVSFTGGPSVTIKSHHNVGGLPERMKMQLVEPLRELFKDEVRALGRELGLPDSFIGRHPFPGPGLAIRCPGGITREKLEILREADAIYLDEIRKAGLYDAIWQAFAVLLPVQTVGVMGDGRTYEFVCALRAVTSVDGMTADFYHYDMEFLGRAATRIINEVRGINRVVYDVTSKPPGTIEWE</sequence>
<evidence type="ECO:0000255" key="1">
    <source>
        <dbReference type="HAMAP-Rule" id="MF_00344"/>
    </source>
</evidence>
<name>GUAA_RHIEC</name>
<keyword id="KW-0067">ATP-binding</keyword>
<keyword id="KW-0315">Glutamine amidotransferase</keyword>
<keyword id="KW-0332">GMP biosynthesis</keyword>
<keyword id="KW-0436">Ligase</keyword>
<keyword id="KW-0547">Nucleotide-binding</keyword>
<keyword id="KW-0658">Purine biosynthesis</keyword>
<keyword id="KW-1185">Reference proteome</keyword>
<feature type="chain" id="PRO_1000120377" description="GMP synthase [glutamine-hydrolyzing]">
    <location>
        <begin position="1"/>
        <end position="520"/>
    </location>
</feature>
<feature type="domain" description="Glutamine amidotransferase type-1" evidence="1">
    <location>
        <begin position="9"/>
        <end position="202"/>
    </location>
</feature>
<feature type="domain" description="GMPS ATP-PPase" evidence="1">
    <location>
        <begin position="203"/>
        <end position="395"/>
    </location>
</feature>
<feature type="active site" description="Nucleophile" evidence="1">
    <location>
        <position position="86"/>
    </location>
</feature>
<feature type="active site" evidence="1">
    <location>
        <position position="176"/>
    </location>
</feature>
<feature type="active site" evidence="1">
    <location>
        <position position="178"/>
    </location>
</feature>
<feature type="binding site" evidence="1">
    <location>
        <begin position="230"/>
        <end position="236"/>
    </location>
    <ligand>
        <name>ATP</name>
        <dbReference type="ChEBI" id="CHEBI:30616"/>
    </ligand>
</feature>
<accession>Q2KDG7</accession>
<protein>
    <recommendedName>
        <fullName evidence="1">GMP synthase [glutamine-hydrolyzing]</fullName>
        <ecNumber evidence="1">6.3.5.2</ecNumber>
    </recommendedName>
    <alternativeName>
        <fullName evidence="1">GMP synthetase</fullName>
    </alternativeName>
    <alternativeName>
        <fullName evidence="1">Glutamine amidotransferase</fullName>
    </alternativeName>
</protein>
<comment type="function">
    <text evidence="1">Catalyzes the synthesis of GMP from XMP.</text>
</comment>
<comment type="catalytic activity">
    <reaction evidence="1">
        <text>XMP + L-glutamine + ATP + H2O = GMP + L-glutamate + AMP + diphosphate + 2 H(+)</text>
        <dbReference type="Rhea" id="RHEA:11680"/>
        <dbReference type="ChEBI" id="CHEBI:15377"/>
        <dbReference type="ChEBI" id="CHEBI:15378"/>
        <dbReference type="ChEBI" id="CHEBI:29985"/>
        <dbReference type="ChEBI" id="CHEBI:30616"/>
        <dbReference type="ChEBI" id="CHEBI:33019"/>
        <dbReference type="ChEBI" id="CHEBI:57464"/>
        <dbReference type="ChEBI" id="CHEBI:58115"/>
        <dbReference type="ChEBI" id="CHEBI:58359"/>
        <dbReference type="ChEBI" id="CHEBI:456215"/>
        <dbReference type="EC" id="6.3.5.2"/>
    </reaction>
</comment>
<comment type="pathway">
    <text evidence="1">Purine metabolism; GMP biosynthesis; GMP from XMP (L-Gln route): step 1/1.</text>
</comment>
<comment type="subunit">
    <text evidence="1">Homodimer.</text>
</comment>
<reference key="1">
    <citation type="journal article" date="2006" name="Proc. Natl. Acad. Sci. U.S.A.">
        <title>The partitioned Rhizobium etli genome: genetic and metabolic redundancy in seven interacting replicons.</title>
        <authorList>
            <person name="Gonzalez V."/>
            <person name="Santamaria R.I."/>
            <person name="Bustos P."/>
            <person name="Hernandez-Gonzalez I."/>
            <person name="Medrano-Soto A."/>
            <person name="Moreno-Hagelsieb G."/>
            <person name="Janga S.C."/>
            <person name="Ramirez M.A."/>
            <person name="Jimenez-Jacinto V."/>
            <person name="Collado-Vides J."/>
            <person name="Davila G."/>
        </authorList>
    </citation>
    <scope>NUCLEOTIDE SEQUENCE [LARGE SCALE GENOMIC DNA]</scope>
    <source>
        <strain>ATCC 51251 / DSM 11541 / JCM 21823 / NBRC 15573 / CFN 42</strain>
    </source>
</reference>
<organism>
    <name type="scientific">Rhizobium etli (strain ATCC 51251 / DSM 11541 / JCM 21823 / NBRC 15573 / CFN 42)</name>
    <dbReference type="NCBI Taxonomy" id="347834"/>
    <lineage>
        <taxon>Bacteria</taxon>
        <taxon>Pseudomonadati</taxon>
        <taxon>Pseudomonadota</taxon>
        <taxon>Alphaproteobacteria</taxon>
        <taxon>Hyphomicrobiales</taxon>
        <taxon>Rhizobiaceae</taxon>
        <taxon>Rhizobium/Agrobacterium group</taxon>
        <taxon>Rhizobium</taxon>
    </lineage>
</organism>